<organism>
    <name type="scientific">Neisseria meningitidis serogroup A / serotype 4A (strain DSM 15465 / Z2491)</name>
    <dbReference type="NCBI Taxonomy" id="122587"/>
    <lineage>
        <taxon>Bacteria</taxon>
        <taxon>Pseudomonadati</taxon>
        <taxon>Pseudomonadota</taxon>
        <taxon>Betaproteobacteria</taxon>
        <taxon>Neisseriales</taxon>
        <taxon>Neisseriaceae</taxon>
        <taxon>Neisseria</taxon>
    </lineage>
</organism>
<reference key="1">
    <citation type="journal article" date="2000" name="Nature">
        <title>Complete DNA sequence of a serogroup A strain of Neisseria meningitidis Z2491.</title>
        <authorList>
            <person name="Parkhill J."/>
            <person name="Achtman M."/>
            <person name="James K.D."/>
            <person name="Bentley S.D."/>
            <person name="Churcher C.M."/>
            <person name="Klee S.R."/>
            <person name="Morelli G."/>
            <person name="Basham D."/>
            <person name="Brown D."/>
            <person name="Chillingworth T."/>
            <person name="Davies R.M."/>
            <person name="Davis P."/>
            <person name="Devlin K."/>
            <person name="Feltwell T."/>
            <person name="Hamlin N."/>
            <person name="Holroyd S."/>
            <person name="Jagels K."/>
            <person name="Leather S."/>
            <person name="Moule S."/>
            <person name="Mungall K.L."/>
            <person name="Quail M.A."/>
            <person name="Rajandream M.A."/>
            <person name="Rutherford K.M."/>
            <person name="Simmonds M."/>
            <person name="Skelton J."/>
            <person name="Whitehead S."/>
            <person name="Spratt B.G."/>
            <person name="Barrell B.G."/>
        </authorList>
    </citation>
    <scope>NUCLEOTIDE SEQUENCE [LARGE SCALE GENOMIC DNA]</scope>
    <source>
        <strain>DSM 15465 / Z2491</strain>
    </source>
</reference>
<gene>
    <name evidence="2" type="primary">lysA</name>
    <name type="ordered locus">NMA0468</name>
</gene>
<dbReference type="EC" id="4.1.1.20" evidence="2"/>
<dbReference type="EMBL" id="AL157959">
    <property type="protein sequence ID" value="CAM07750.1"/>
    <property type="molecule type" value="Genomic_DNA"/>
</dbReference>
<dbReference type="PIR" id="D81964">
    <property type="entry name" value="D81964"/>
</dbReference>
<dbReference type="RefSeq" id="WP_010981083.1">
    <property type="nucleotide sequence ID" value="NC_003116.1"/>
</dbReference>
<dbReference type="SMR" id="Q9JWA6"/>
<dbReference type="EnsemblBacteria" id="CAM07750">
    <property type="protein sequence ID" value="CAM07750"/>
    <property type="gene ID" value="NMA0468"/>
</dbReference>
<dbReference type="KEGG" id="nma:NMA0468"/>
<dbReference type="HOGENOM" id="CLU_026444_0_0_4"/>
<dbReference type="UniPathway" id="UPA00034">
    <property type="reaction ID" value="UER00027"/>
</dbReference>
<dbReference type="Proteomes" id="UP000000626">
    <property type="component" value="Chromosome"/>
</dbReference>
<dbReference type="GO" id="GO:0008836">
    <property type="term" value="F:diaminopimelate decarboxylase activity"/>
    <property type="evidence" value="ECO:0007669"/>
    <property type="project" value="UniProtKB-UniRule"/>
</dbReference>
<dbReference type="GO" id="GO:0030170">
    <property type="term" value="F:pyridoxal phosphate binding"/>
    <property type="evidence" value="ECO:0007669"/>
    <property type="project" value="UniProtKB-UniRule"/>
</dbReference>
<dbReference type="GO" id="GO:0009089">
    <property type="term" value="P:lysine biosynthetic process via diaminopimelate"/>
    <property type="evidence" value="ECO:0007669"/>
    <property type="project" value="UniProtKB-UniRule"/>
</dbReference>
<dbReference type="CDD" id="cd06828">
    <property type="entry name" value="PLPDE_III_DapDC"/>
    <property type="match status" value="1"/>
</dbReference>
<dbReference type="FunFam" id="2.40.37.10:FF:000003">
    <property type="entry name" value="Diaminopimelate decarboxylase"/>
    <property type="match status" value="1"/>
</dbReference>
<dbReference type="FunFam" id="3.20.20.10:FF:000003">
    <property type="entry name" value="Diaminopimelate decarboxylase"/>
    <property type="match status" value="1"/>
</dbReference>
<dbReference type="Gene3D" id="3.20.20.10">
    <property type="entry name" value="Alanine racemase"/>
    <property type="match status" value="1"/>
</dbReference>
<dbReference type="Gene3D" id="2.40.37.10">
    <property type="entry name" value="Lyase, Ornithine Decarboxylase, Chain A, domain 1"/>
    <property type="match status" value="1"/>
</dbReference>
<dbReference type="HAMAP" id="MF_02120">
    <property type="entry name" value="LysA"/>
    <property type="match status" value="1"/>
</dbReference>
<dbReference type="InterPro" id="IPR009006">
    <property type="entry name" value="Ala_racemase/Decarboxylase_C"/>
</dbReference>
<dbReference type="InterPro" id="IPR002986">
    <property type="entry name" value="DAP_deCOOHase_LysA"/>
</dbReference>
<dbReference type="InterPro" id="IPR022643">
    <property type="entry name" value="De-COase2_C"/>
</dbReference>
<dbReference type="InterPro" id="IPR022657">
    <property type="entry name" value="De-COase2_CS"/>
</dbReference>
<dbReference type="InterPro" id="IPR022644">
    <property type="entry name" value="De-COase2_N"/>
</dbReference>
<dbReference type="InterPro" id="IPR000183">
    <property type="entry name" value="Orn/DAP/Arg_de-COase"/>
</dbReference>
<dbReference type="InterPro" id="IPR029066">
    <property type="entry name" value="PLP-binding_barrel"/>
</dbReference>
<dbReference type="NCBIfam" id="TIGR01048">
    <property type="entry name" value="lysA"/>
    <property type="match status" value="1"/>
</dbReference>
<dbReference type="PANTHER" id="PTHR43727">
    <property type="entry name" value="DIAMINOPIMELATE DECARBOXYLASE"/>
    <property type="match status" value="1"/>
</dbReference>
<dbReference type="PANTHER" id="PTHR43727:SF2">
    <property type="entry name" value="GROUP IV DECARBOXYLASE"/>
    <property type="match status" value="1"/>
</dbReference>
<dbReference type="Pfam" id="PF02784">
    <property type="entry name" value="Orn_Arg_deC_N"/>
    <property type="match status" value="1"/>
</dbReference>
<dbReference type="Pfam" id="PF00278">
    <property type="entry name" value="Orn_DAP_Arg_deC"/>
    <property type="match status" value="1"/>
</dbReference>
<dbReference type="PRINTS" id="PR01181">
    <property type="entry name" value="DAPDCRBXLASE"/>
</dbReference>
<dbReference type="PRINTS" id="PR01179">
    <property type="entry name" value="ODADCRBXLASE"/>
</dbReference>
<dbReference type="SUPFAM" id="SSF50621">
    <property type="entry name" value="Alanine racemase C-terminal domain-like"/>
    <property type="match status" value="1"/>
</dbReference>
<dbReference type="SUPFAM" id="SSF51419">
    <property type="entry name" value="PLP-binding barrel"/>
    <property type="match status" value="1"/>
</dbReference>
<dbReference type="PROSITE" id="PS00879">
    <property type="entry name" value="ODR_DC_2_2"/>
    <property type="match status" value="1"/>
</dbReference>
<comment type="function">
    <text evidence="2">Specifically catalyzes the decarboxylation of meso-diaminopimelate (meso-DAP) to L-lysine.</text>
</comment>
<comment type="catalytic activity">
    <reaction evidence="2">
        <text>meso-2,6-diaminopimelate + H(+) = L-lysine + CO2</text>
        <dbReference type="Rhea" id="RHEA:15101"/>
        <dbReference type="ChEBI" id="CHEBI:15378"/>
        <dbReference type="ChEBI" id="CHEBI:16526"/>
        <dbReference type="ChEBI" id="CHEBI:32551"/>
        <dbReference type="ChEBI" id="CHEBI:57791"/>
        <dbReference type="EC" id="4.1.1.20"/>
    </reaction>
</comment>
<comment type="cofactor">
    <cofactor evidence="2">
        <name>pyridoxal 5'-phosphate</name>
        <dbReference type="ChEBI" id="CHEBI:597326"/>
    </cofactor>
</comment>
<comment type="pathway">
    <text evidence="2">Amino-acid biosynthesis; L-lysine biosynthesis via DAP pathway; L-lysine from DL-2,6-diaminopimelate: step 1/1.</text>
</comment>
<comment type="subunit">
    <text evidence="2">Homodimer.</text>
</comment>
<comment type="similarity">
    <text evidence="2">Belongs to the Orn/Lys/Arg decarboxylase class-II family. LysA subfamily.</text>
</comment>
<sequence>MTLFCEQVPYPRLAEAFGTPLYVYSQSALTEAFEHYQTAFAELSPLVCYAVKANGNLSIIKHFASLGSGFDIVSGGELARVLAAGGDAAKTIFSGVGKSEAEIEFALNAGVKCFNMESIPEIDRIQKVAARLGKTASVSLRVNPDVDAKTHPYISTGLKANKFGIAYADALEAYRHAAQQPNLKIIGIDCHIGSQLTDLSPLVEACERILILVDALAAEGIVLEHLDLGGGVGIVYQDEDVPDLGAYAQAVQKLIGTRRLKLILEPGRSLVGNAGALLTRVEFVKYGEEKNFVMVDAAMNDLMRPALYDAYHHIEAVEPKNIAPLTANIVGPICETGDFLGKDRTIACEEGDLLLIRSAGAYGASMASNYNARNRAAEVLVDGNEYRLIRRRETLEQQMANELACL</sequence>
<evidence type="ECO:0000255" key="1"/>
<evidence type="ECO:0000255" key="2">
    <source>
        <dbReference type="HAMAP-Rule" id="MF_02120"/>
    </source>
</evidence>
<feature type="chain" id="PRO_0000149931" description="Diaminopimelate decarboxylase">
    <location>
        <begin position="1"/>
        <end position="406"/>
    </location>
</feature>
<feature type="active site" description="Proton donor" evidence="1">
    <location>
        <position position="334"/>
    </location>
</feature>
<feature type="binding site" evidence="2">
    <location>
        <position position="231"/>
    </location>
    <ligand>
        <name>pyridoxal 5'-phosphate</name>
        <dbReference type="ChEBI" id="CHEBI:597326"/>
    </ligand>
</feature>
<feature type="binding site" evidence="2">
    <location>
        <begin position="265"/>
        <end position="268"/>
    </location>
    <ligand>
        <name>pyridoxal 5'-phosphate</name>
        <dbReference type="ChEBI" id="CHEBI:597326"/>
    </ligand>
</feature>
<feature type="binding site" evidence="2">
    <location>
        <position position="268"/>
    </location>
    <ligand>
        <name>substrate</name>
    </ligand>
</feature>
<feature type="binding site" evidence="2">
    <location>
        <position position="304"/>
    </location>
    <ligand>
        <name>substrate</name>
    </ligand>
</feature>
<feature type="binding site" evidence="2">
    <location>
        <position position="308"/>
    </location>
    <ligand>
        <name>substrate</name>
    </ligand>
</feature>
<feature type="binding site" evidence="2">
    <location>
        <position position="335"/>
    </location>
    <ligand>
        <name>substrate</name>
    </ligand>
</feature>
<feature type="binding site" evidence="2">
    <location>
        <position position="362"/>
    </location>
    <ligand>
        <name>pyridoxal 5'-phosphate</name>
        <dbReference type="ChEBI" id="CHEBI:597326"/>
    </ligand>
</feature>
<feature type="binding site" evidence="2">
    <location>
        <position position="362"/>
    </location>
    <ligand>
        <name>substrate</name>
    </ligand>
</feature>
<feature type="modified residue" description="N6-(pyridoxal phosphate)lysine" evidence="2">
    <location>
        <position position="52"/>
    </location>
</feature>
<keyword id="KW-0028">Amino-acid biosynthesis</keyword>
<keyword id="KW-0210">Decarboxylase</keyword>
<keyword id="KW-0456">Lyase</keyword>
<keyword id="KW-0457">Lysine biosynthesis</keyword>
<keyword id="KW-0663">Pyridoxal phosphate</keyword>
<accession>Q9JWA6</accession>
<accession>A1IPS9</accession>
<proteinExistence type="inferred from homology"/>
<protein>
    <recommendedName>
        <fullName evidence="2">Diaminopimelate decarboxylase</fullName>
        <shortName evidence="2">DAP decarboxylase</shortName>
        <shortName evidence="2">DAPDC</shortName>
        <ecNumber evidence="2">4.1.1.20</ecNumber>
    </recommendedName>
</protein>
<name>DCDA_NEIMA</name>